<comment type="function">
    <text evidence="1">RNA chaperone that binds small regulatory RNA (sRNAs) and mRNAs to facilitate mRNA translational regulation in response to envelope stress, environmental stress and changes in metabolite concentrations. Also binds with high specificity to tRNAs.</text>
</comment>
<comment type="subunit">
    <text evidence="1">Homohexamer.</text>
</comment>
<comment type="similarity">
    <text evidence="1">Belongs to the Hfq family.</text>
</comment>
<proteinExistence type="inferred from homology"/>
<name>HFQ_PSE14</name>
<keyword id="KW-0694">RNA-binding</keyword>
<keyword id="KW-0346">Stress response</keyword>
<organism>
    <name type="scientific">Pseudomonas savastanoi pv. phaseolicola (strain 1448A / Race 6)</name>
    <name type="common">Pseudomonas syringae pv. phaseolicola (strain 1448A / Race 6)</name>
    <dbReference type="NCBI Taxonomy" id="264730"/>
    <lineage>
        <taxon>Bacteria</taxon>
        <taxon>Pseudomonadati</taxon>
        <taxon>Pseudomonadota</taxon>
        <taxon>Gammaproteobacteria</taxon>
        <taxon>Pseudomonadales</taxon>
        <taxon>Pseudomonadaceae</taxon>
        <taxon>Pseudomonas</taxon>
    </lineage>
</organism>
<protein>
    <recommendedName>
        <fullName evidence="1">RNA-binding protein Hfq</fullName>
    </recommendedName>
</protein>
<reference key="1">
    <citation type="journal article" date="2005" name="J. Bacteriol.">
        <title>Whole-genome sequence analysis of Pseudomonas syringae pv. phaseolicola 1448A reveals divergence among pathovars in genes involved in virulence and transposition.</title>
        <authorList>
            <person name="Joardar V."/>
            <person name="Lindeberg M."/>
            <person name="Jackson R.W."/>
            <person name="Selengut J."/>
            <person name="Dodson R."/>
            <person name="Brinkac L.M."/>
            <person name="Daugherty S.C."/>
            <person name="DeBoy R.T."/>
            <person name="Durkin A.S."/>
            <person name="Gwinn Giglio M."/>
            <person name="Madupu R."/>
            <person name="Nelson W.C."/>
            <person name="Rosovitz M.J."/>
            <person name="Sullivan S.A."/>
            <person name="Crabtree J."/>
            <person name="Creasy T."/>
            <person name="Davidsen T.M."/>
            <person name="Haft D.H."/>
            <person name="Zafar N."/>
            <person name="Zhou L."/>
            <person name="Halpin R."/>
            <person name="Holley T."/>
            <person name="Khouri H.M."/>
            <person name="Feldblyum T.V."/>
            <person name="White O."/>
            <person name="Fraser C.M."/>
            <person name="Chatterjee A.K."/>
            <person name="Cartinhour S."/>
            <person name="Schneider D."/>
            <person name="Mansfield J.W."/>
            <person name="Collmer A."/>
            <person name="Buell R."/>
        </authorList>
    </citation>
    <scope>NUCLEOTIDE SEQUENCE [LARGE SCALE GENOMIC DNA]</scope>
    <source>
        <strain>1448A / Race 6</strain>
    </source>
</reference>
<gene>
    <name evidence="1" type="primary">hfq</name>
    <name type="ordered locus">PSPPH_0565</name>
</gene>
<accession>Q48P02</accession>
<sequence length="86" mass="9354">MSKGHSLQDPYLNTLRKEKVGVSIYLVNGIKLQGTIESFDQFVILLKNTVSQMVYKHAISTVVPVRPIRLPSATDADGADAEPGNA</sequence>
<dbReference type="EMBL" id="CP000058">
    <property type="protein sequence ID" value="AAZ36074.1"/>
    <property type="molecule type" value="Genomic_DNA"/>
</dbReference>
<dbReference type="RefSeq" id="WP_002551819.1">
    <property type="nucleotide sequence ID" value="NC_005773.3"/>
</dbReference>
<dbReference type="SMR" id="Q48P02"/>
<dbReference type="GeneID" id="96216907"/>
<dbReference type="KEGG" id="psp:PSPPH_0565"/>
<dbReference type="eggNOG" id="COG1923">
    <property type="taxonomic scope" value="Bacteria"/>
</dbReference>
<dbReference type="HOGENOM" id="CLU_113688_2_2_6"/>
<dbReference type="Proteomes" id="UP000000551">
    <property type="component" value="Chromosome"/>
</dbReference>
<dbReference type="GO" id="GO:0005829">
    <property type="term" value="C:cytosol"/>
    <property type="evidence" value="ECO:0007669"/>
    <property type="project" value="TreeGrafter"/>
</dbReference>
<dbReference type="GO" id="GO:0003723">
    <property type="term" value="F:RNA binding"/>
    <property type="evidence" value="ECO:0007669"/>
    <property type="project" value="UniProtKB-UniRule"/>
</dbReference>
<dbReference type="GO" id="GO:0006355">
    <property type="term" value="P:regulation of DNA-templated transcription"/>
    <property type="evidence" value="ECO:0007669"/>
    <property type="project" value="InterPro"/>
</dbReference>
<dbReference type="GO" id="GO:0043487">
    <property type="term" value="P:regulation of RNA stability"/>
    <property type="evidence" value="ECO:0007669"/>
    <property type="project" value="TreeGrafter"/>
</dbReference>
<dbReference type="GO" id="GO:0045974">
    <property type="term" value="P:regulation of translation, ncRNA-mediated"/>
    <property type="evidence" value="ECO:0007669"/>
    <property type="project" value="TreeGrafter"/>
</dbReference>
<dbReference type="CDD" id="cd01716">
    <property type="entry name" value="Hfq"/>
    <property type="match status" value="1"/>
</dbReference>
<dbReference type="FunFam" id="2.30.30.100:FF:000001">
    <property type="entry name" value="RNA-binding protein Hfq"/>
    <property type="match status" value="1"/>
</dbReference>
<dbReference type="Gene3D" id="2.30.30.100">
    <property type="match status" value="1"/>
</dbReference>
<dbReference type="HAMAP" id="MF_00436">
    <property type="entry name" value="Hfq"/>
    <property type="match status" value="1"/>
</dbReference>
<dbReference type="InterPro" id="IPR005001">
    <property type="entry name" value="Hfq"/>
</dbReference>
<dbReference type="InterPro" id="IPR010920">
    <property type="entry name" value="LSM_dom_sf"/>
</dbReference>
<dbReference type="InterPro" id="IPR047575">
    <property type="entry name" value="Sm"/>
</dbReference>
<dbReference type="NCBIfam" id="TIGR02383">
    <property type="entry name" value="Hfq"/>
    <property type="match status" value="1"/>
</dbReference>
<dbReference type="NCBIfam" id="NF001602">
    <property type="entry name" value="PRK00395.1"/>
    <property type="match status" value="1"/>
</dbReference>
<dbReference type="PANTHER" id="PTHR34772">
    <property type="entry name" value="RNA-BINDING PROTEIN HFQ"/>
    <property type="match status" value="1"/>
</dbReference>
<dbReference type="PANTHER" id="PTHR34772:SF1">
    <property type="entry name" value="RNA-BINDING PROTEIN HFQ"/>
    <property type="match status" value="1"/>
</dbReference>
<dbReference type="Pfam" id="PF17209">
    <property type="entry name" value="Hfq"/>
    <property type="match status" value="1"/>
</dbReference>
<dbReference type="SUPFAM" id="SSF50182">
    <property type="entry name" value="Sm-like ribonucleoproteins"/>
    <property type="match status" value="1"/>
</dbReference>
<dbReference type="PROSITE" id="PS52002">
    <property type="entry name" value="SM"/>
    <property type="match status" value="1"/>
</dbReference>
<evidence type="ECO:0000255" key="1">
    <source>
        <dbReference type="HAMAP-Rule" id="MF_00436"/>
    </source>
</evidence>
<evidence type="ECO:0000255" key="2">
    <source>
        <dbReference type="PROSITE-ProRule" id="PRU01346"/>
    </source>
</evidence>
<feature type="chain" id="PRO_0000265175" description="RNA-binding protein Hfq">
    <location>
        <begin position="1"/>
        <end position="86"/>
    </location>
</feature>
<feature type="domain" description="Sm" evidence="2">
    <location>
        <begin position="9"/>
        <end position="68"/>
    </location>
</feature>